<accession>P18956</accession>
<accession>Q2M7B0</accession>
<protein>
    <recommendedName>
        <fullName>Glutathione hydrolase proenzyme</fullName>
        <ecNumber evidence="11">3.4.19.13</ecNumber>
    </recommendedName>
    <alternativeName>
        <fullName evidence="9">Gamma-glutamyltranspeptidase proenzyme</fullName>
        <shortName>GGT</shortName>
        <ecNumber evidence="2">2.3.2.2</ecNumber>
    </alternativeName>
    <component>
        <recommendedName>
            <fullName>Glutathione hydrolase large chain</fullName>
        </recommendedName>
    </component>
    <component>
        <recommendedName>
            <fullName>Glutathione hydrolase small chain</fullName>
        </recommendedName>
    </component>
</protein>
<sequence>MIKPTFLRRVAIAALLSGSCFSAAAAPPAPPVSYGVEEDVFHPVRAKQGMVASVDATATQVGVDILKEGGNAVDAAVAVGYALAVTHPQAGNLGGGGFMLIRSKNGNTTAIDFREMAPAKATRDMFLDDQGNPDSKKSLTSHLASGTPGTVAGFSLALDKYGTMPLNKVVQPAFKLARDGFIVNDALADDLKTYGSEVLPNHENSKAIFWKEGEPLKKGDTLVQANLAKSLEMIAENGPDEFYKGTIAEQIAQEMQKNGGLITKEDLAAYKAVERTPISGDYRGYQVYSMPPPSSGGIHIVQILNILENFDMKKYGFGSADAMQIMAEAEKYAYADRSEYLGDPDFVKVPWQALTNKAYAKSIADQIDINKAKPSSEIRPGKLAPYESNQTTHYSVVDKDGNAVAVTYTLNTTFGTGIVAGESGILLNNQMDDFSAKPGVPNVYGLVGGDANAVGPNKRPLSSMSPTIVVKDGKTWLVTGSPGGSRIITTVLQMVVNSIDYGLNVAEATNAPRFHHQWLPDELRVEKGFSPDTLKLLEAKGQKVALKEAMGSTQSIMVGPDGELYGASDPRSVDDLTAGY</sequence>
<proteinExistence type="evidence at protein level"/>
<feature type="signal peptide" evidence="6">
    <location>
        <begin position="1"/>
        <end position="25"/>
    </location>
</feature>
<feature type="chain" id="PRO_0000011052" description="Glutathione hydrolase large chain">
    <location>
        <begin position="26"/>
        <end position="390"/>
    </location>
</feature>
<feature type="chain" id="PRO_0000011053" description="Glutathione hydrolase small chain">
    <location>
        <begin position="391"/>
        <end position="580"/>
    </location>
</feature>
<feature type="region of interest" description="Disordered" evidence="1">
    <location>
        <begin position="561"/>
        <end position="580"/>
    </location>
</feature>
<feature type="active site" description="Nucleophile" evidence="3 5">
    <location>
        <position position="391"/>
    </location>
</feature>
<feature type="binding site" evidence="3">
    <location>
        <position position="114"/>
    </location>
    <ligand>
        <name>L-glutamate</name>
        <dbReference type="ChEBI" id="CHEBI:29985"/>
    </ligand>
</feature>
<feature type="binding site" evidence="3">
    <location>
        <position position="409"/>
    </location>
    <ligand>
        <name>L-glutamate</name>
        <dbReference type="ChEBI" id="CHEBI:29985"/>
    </ligand>
</feature>
<feature type="binding site" evidence="3">
    <location>
        <position position="411"/>
    </location>
    <ligand>
        <name>L-glutamate</name>
        <dbReference type="ChEBI" id="CHEBI:29985"/>
    </ligand>
</feature>
<feature type="binding site" evidence="3">
    <location>
        <position position="430"/>
    </location>
    <ligand>
        <name>L-glutamate</name>
        <dbReference type="ChEBI" id="CHEBI:29985"/>
    </ligand>
</feature>
<feature type="binding site" evidence="3">
    <location>
        <position position="433"/>
    </location>
    <ligand>
        <name>L-glutamate</name>
        <dbReference type="ChEBI" id="CHEBI:29985"/>
    </ligand>
</feature>
<feature type="binding site">
    <location>
        <begin position="462"/>
        <end position="463"/>
    </location>
    <ligand>
        <name>L-glutamate</name>
        <dbReference type="ChEBI" id="CHEBI:29985"/>
    </ligand>
</feature>
<feature type="binding site">
    <location>
        <begin position="483"/>
        <end position="484"/>
    </location>
    <ligand>
        <name>L-glutamate</name>
        <dbReference type="ChEBI" id="CHEBI:29985"/>
    </ligand>
</feature>
<feature type="mutagenesis site" description="Abolishes autocatalytic cleavage, loss of enzymatic activity." evidence="4">
    <original>T</original>
    <variation>A</variation>
    <location>
        <position position="391"/>
    </location>
</feature>
<feature type="mutagenesis site" description="Not processed into its subunits, loss of enzymatic activity." evidence="2">
    <original>R</original>
    <variation>A</variation>
    <location>
        <position position="513"/>
    </location>
</feature>
<feature type="mutagenesis site" description="Not processed into its subunits, loss of enzymatic activity." evidence="2">
    <original>R</original>
    <variation>G</variation>
    <location>
        <position position="571"/>
    </location>
</feature>
<feature type="strand" evidence="13">
    <location>
        <begin position="39"/>
        <end position="41"/>
    </location>
</feature>
<feature type="strand" evidence="14">
    <location>
        <begin position="44"/>
        <end position="48"/>
    </location>
</feature>
<feature type="strand" evidence="14">
    <location>
        <begin position="50"/>
        <end position="54"/>
    </location>
</feature>
<feature type="helix" evidence="14">
    <location>
        <begin position="56"/>
        <end position="67"/>
    </location>
</feature>
<feature type="helix" evidence="14">
    <location>
        <begin position="72"/>
        <end position="86"/>
    </location>
</feature>
<feature type="turn" evidence="14">
    <location>
        <begin position="88"/>
        <end position="90"/>
    </location>
</feature>
<feature type="strand" evidence="14">
    <location>
        <begin position="93"/>
        <end position="102"/>
    </location>
</feature>
<feature type="strand" evidence="14">
    <location>
        <begin position="108"/>
        <end position="113"/>
    </location>
</feature>
<feature type="turn" evidence="14">
    <location>
        <begin position="123"/>
        <end position="126"/>
    </location>
</feature>
<feature type="strand" evidence="15">
    <location>
        <begin position="129"/>
        <end position="131"/>
    </location>
</feature>
<feature type="helix" evidence="14">
    <location>
        <begin position="135"/>
        <end position="139"/>
    </location>
</feature>
<feature type="helix" evidence="14">
    <location>
        <begin position="142"/>
        <end position="144"/>
    </location>
</feature>
<feature type="helix" evidence="14">
    <location>
        <begin position="150"/>
        <end position="161"/>
    </location>
</feature>
<feature type="helix" evidence="14">
    <location>
        <begin position="166"/>
        <end position="179"/>
    </location>
</feature>
<feature type="helix" evidence="14">
    <location>
        <begin position="185"/>
        <end position="193"/>
    </location>
</feature>
<feature type="helix" evidence="14">
    <location>
        <begin position="195"/>
        <end position="197"/>
    </location>
</feature>
<feature type="helix" evidence="14">
    <location>
        <begin position="199"/>
        <end position="201"/>
    </location>
</feature>
<feature type="helix" evidence="14">
    <location>
        <begin position="203"/>
        <end position="209"/>
    </location>
</feature>
<feature type="helix" evidence="14">
    <location>
        <begin position="225"/>
        <end position="237"/>
    </location>
</feature>
<feature type="helix" evidence="14">
    <location>
        <begin position="240"/>
        <end position="243"/>
    </location>
</feature>
<feature type="helix" evidence="14">
    <location>
        <begin position="246"/>
        <end position="257"/>
    </location>
</feature>
<feature type="helix" evidence="14">
    <location>
        <begin position="264"/>
        <end position="269"/>
    </location>
</feature>
<feature type="strand" evidence="14">
    <location>
        <begin position="273"/>
        <end position="275"/>
    </location>
</feature>
<feature type="strand" evidence="14">
    <location>
        <begin position="278"/>
        <end position="282"/>
    </location>
</feature>
<feature type="strand" evidence="14">
    <location>
        <begin position="285"/>
        <end position="289"/>
    </location>
</feature>
<feature type="helix" evidence="14">
    <location>
        <begin position="296"/>
        <end position="307"/>
    </location>
</feature>
<feature type="helix" evidence="14">
    <location>
        <begin position="312"/>
        <end position="315"/>
    </location>
</feature>
<feature type="helix" evidence="14">
    <location>
        <begin position="320"/>
        <end position="340"/>
    </location>
</feature>
<feature type="turn" evidence="14">
    <location>
        <begin position="344"/>
        <end position="346"/>
    </location>
</feature>
<feature type="helix" evidence="14">
    <location>
        <begin position="351"/>
        <end position="354"/>
    </location>
</feature>
<feature type="helix" evidence="14">
    <location>
        <begin position="357"/>
        <end position="364"/>
    </location>
</feature>
<feature type="helix" evidence="14">
    <location>
        <begin position="375"/>
        <end position="377"/>
    </location>
</feature>
<feature type="helix" evidence="14">
    <location>
        <begin position="384"/>
        <end position="386"/>
    </location>
</feature>
<feature type="strand" evidence="14">
    <location>
        <begin position="392"/>
        <end position="397"/>
    </location>
</feature>
<feature type="strand" evidence="14">
    <location>
        <begin position="403"/>
        <end position="409"/>
    </location>
</feature>
<feature type="turn" evidence="14">
    <location>
        <begin position="413"/>
        <end position="416"/>
    </location>
</feature>
<feature type="helix" evidence="14">
    <location>
        <begin position="421"/>
        <end position="423"/>
    </location>
</feature>
<feature type="helix" evidence="14">
    <location>
        <begin position="430"/>
        <end position="433"/>
    </location>
</feature>
<feature type="strand" evidence="14">
    <location>
        <begin position="434"/>
        <end position="437"/>
    </location>
</feature>
<feature type="strand" evidence="14">
    <location>
        <begin position="467"/>
        <end position="471"/>
    </location>
</feature>
<feature type="strand" evidence="14">
    <location>
        <begin position="474"/>
        <end position="479"/>
    </location>
</feature>
<feature type="helix" evidence="14">
    <location>
        <begin position="484"/>
        <end position="486"/>
    </location>
</feature>
<feature type="helix" evidence="14">
    <location>
        <begin position="487"/>
        <end position="499"/>
    </location>
</feature>
<feature type="helix" evidence="14">
    <location>
        <begin position="505"/>
        <end position="510"/>
    </location>
</feature>
<feature type="strand" evidence="14">
    <location>
        <begin position="518"/>
        <end position="520"/>
    </location>
</feature>
<feature type="strand" evidence="14">
    <location>
        <begin position="523"/>
        <end position="525"/>
    </location>
</feature>
<feature type="helix" evidence="14">
    <location>
        <begin position="531"/>
        <end position="539"/>
    </location>
</feature>
<feature type="strand" evidence="14">
    <location>
        <begin position="544"/>
        <end position="546"/>
    </location>
</feature>
<feature type="strand" evidence="14">
    <location>
        <begin position="554"/>
        <end position="558"/>
    </location>
</feature>
<feature type="strand" evidence="14">
    <location>
        <begin position="564"/>
        <end position="568"/>
    </location>
</feature>
<feature type="strand" evidence="14">
    <location>
        <begin position="576"/>
        <end position="579"/>
    </location>
</feature>
<reference key="1">
    <citation type="journal article" date="1989" name="J. Bacteriol.">
        <title>DNA sequence of the Escherichia coli K-12 gamma-glutamyltranspeptidase gene, ggt.</title>
        <authorList>
            <person name="Suzuki H."/>
            <person name="Kumagai H."/>
            <person name="Echigo T."/>
            <person name="Tochikura T."/>
        </authorList>
    </citation>
    <scope>NUCLEOTIDE SEQUENCE [GENOMIC DNA]</scope>
    <scope>PROTEIN SEQUENCE OF 26-41 AND 391-403</scope>
    <source>
        <strain>K12</strain>
    </source>
</reference>
<reference key="2">
    <citation type="journal article" date="1997" name="Science">
        <title>The complete genome sequence of Escherichia coli K-12.</title>
        <authorList>
            <person name="Blattner F.R."/>
            <person name="Plunkett G. III"/>
            <person name="Bloch C.A."/>
            <person name="Perna N.T."/>
            <person name="Burland V."/>
            <person name="Riley M."/>
            <person name="Collado-Vides J."/>
            <person name="Glasner J.D."/>
            <person name="Rode C.K."/>
            <person name="Mayhew G.F."/>
            <person name="Gregor J."/>
            <person name="Davis N.W."/>
            <person name="Kirkpatrick H.A."/>
            <person name="Goeden M.A."/>
            <person name="Rose D.J."/>
            <person name="Mau B."/>
            <person name="Shao Y."/>
        </authorList>
    </citation>
    <scope>NUCLEOTIDE SEQUENCE [LARGE SCALE GENOMIC DNA]</scope>
    <source>
        <strain>K12 / MG1655 / ATCC 47076</strain>
    </source>
</reference>
<reference key="3">
    <citation type="journal article" date="2006" name="Mol. Syst. Biol.">
        <title>Highly accurate genome sequences of Escherichia coli K-12 strains MG1655 and W3110.</title>
        <authorList>
            <person name="Hayashi K."/>
            <person name="Morooka N."/>
            <person name="Yamamoto Y."/>
            <person name="Fujita K."/>
            <person name="Isono K."/>
            <person name="Choi S."/>
            <person name="Ohtsubo E."/>
            <person name="Baba T."/>
            <person name="Wanner B.L."/>
            <person name="Mori H."/>
            <person name="Horiuchi T."/>
        </authorList>
    </citation>
    <scope>NUCLEOTIDE SEQUENCE [LARGE SCALE GENOMIC DNA]</scope>
    <source>
        <strain>K12 / W3110 / ATCC 27325 / DSM 5911</strain>
    </source>
</reference>
<reference key="4">
    <citation type="journal article" date="1994" name="Nucleic Acids Res.">
        <title>Analysis of the Escherichia coli genome. V. DNA sequence of the region from 76.0 to 81.5 minutes.</title>
        <authorList>
            <person name="Sofia H.J."/>
            <person name="Burland V."/>
            <person name="Daniels D.L."/>
            <person name="Plunkett G. III"/>
            <person name="Blattner F.R."/>
        </authorList>
    </citation>
    <scope>NUCLEOTIDE SEQUENCE [LARGE SCALE GENOMIC DNA] OF 1-362</scope>
    <source>
        <strain>K12 / MG1655 / ATCC 47076</strain>
    </source>
</reference>
<reference key="5">
    <citation type="journal article" date="1986" name="J. Bacteriol.">
        <title>gamma-Glutamyltranspeptidase from Escherichia coli K-12: purification and properties.</title>
        <authorList>
            <person name="Suzuki H."/>
            <person name="Kumagai H."/>
            <person name="Tochikura T."/>
        </authorList>
    </citation>
    <scope>FUNCTION</scope>
    <scope>ACTIVITY REGULATION</scope>
    <scope>BIOPHYSICOCHEMICAL PROPERTIES</scope>
    <scope>SUBUNIT</scope>
    <scope>SUBCELLULAR LOCATION</scope>
    <source>
        <strain>K12 / MG1655 / ATCC 47076</strain>
    </source>
</reference>
<reference key="6">
    <citation type="journal article" date="1992" name="Biochem. Biophys. Res. Commun.">
        <title>Escherichia coli gamma-glutamyltranspeptidase mutants deficient in processing to subunits.</title>
        <authorList>
            <person name="Hashimoto W."/>
            <person name="Suzuki H."/>
            <person name="Nohara S."/>
            <person name="Kumagai H."/>
        </authorList>
    </citation>
    <scope>CATALYTIC ACTIVITY</scope>
    <scope>SUBCELLULAR LOCATION</scope>
    <scope>SUBUNIT</scope>
    <scope>MUTAGENESIS OF ARG-513 AND ARG-571</scope>
    <scope>AUTOCATALYTIC CLEAVAGE</scope>
</reference>
<reference key="7">
    <citation type="journal article" date="1993" name="J. Bacteriol.">
        <title>Escherichia coli K-12 can utilize an exogenous gamma-glutamyl peptide as an amino acid source, for which gamma-glutamyltranspeptidase is essential.</title>
        <authorList>
            <person name="Suzuki H."/>
            <person name="Hashimoto W."/>
            <person name="Kumagai H."/>
        </authorList>
    </citation>
    <scope>FUNCTION</scope>
    <scope>DISRUPTION PHENOTYPE</scope>
</reference>
<reference key="8">
    <citation type="journal article" date="2006" name="Proc. Natl. Acad. Sci. U.S.A.">
        <title>Crystal structures of gamma-glutamyltranspeptidase from Escherichia coli, a key enzyme in glutathione metabolism, and its reaction intermediate.</title>
        <authorList>
            <person name="Okada T."/>
            <person name="Suzuki H."/>
            <person name="Wada K."/>
            <person name="Kumagai H."/>
            <person name="Fukuyama K."/>
        </authorList>
    </citation>
    <scope>X-RAY CRYSTALLOGRAPHY (1.60 ANGSTROMS) OF 25-580 IN COMPLEX WITH GLUTAMATE</scope>
    <scope>SUBUNIT</scope>
    <scope>ACTIVE SITE</scope>
    <scope>AUTOCATALYTIC CLEAVAGE</scope>
</reference>
<reference key="9">
    <citation type="journal article" date="2007" name="J. Biol. Chem.">
        <title>Crystal structure of the gamma-glutamyltranspeptidase precursor protein from Escherichia coli. Structural changes upon autocatalytic processing and implications for the maturation mechanism.</title>
        <authorList>
            <person name="Okada T."/>
            <person name="Suzuki H."/>
            <person name="Wada K."/>
            <person name="Kumagai H."/>
            <person name="Fukuyama K."/>
        </authorList>
    </citation>
    <scope>X-RAY CRYSTALLOGRAPHY (1.95 ANGSTROMS) OF 25-580 OF MUTANT ALA-391</scope>
    <scope>SUBUNIT</scope>
    <scope>AUTOCATALYTIC CLEAVAGE</scope>
    <scope>MUTAGENESIS OF THR-391</scope>
</reference>
<reference key="10">
    <citation type="journal article" date="2008" name="J. Mol. Biol.">
        <title>Crystal structures of Escherichia coli gamma-glutamyltranspeptidase in complex with azaserine and acivicin: novel mechanistic implication for inhibition by glutamine antagonists.</title>
        <authorList>
            <person name="Wada K."/>
            <person name="Hiratake J."/>
            <person name="Irie M."/>
            <person name="Okada T."/>
            <person name="Yamada C."/>
            <person name="Kumagai H."/>
            <person name="Suzuki H."/>
            <person name="Fukuyama K."/>
        </authorList>
    </citation>
    <scope>X-RAY CRYSTALLOGRAPHY (1.65 ANGSTROMS) OF 25-580 IN COMPLEXES WITH AZASERINE AND ACIVICIN</scope>
    <scope>ACTIVE SITE</scope>
    <scope>SUBUNIT</scope>
    <scope>AUTOCATALYTIC CLEAVAGE</scope>
</reference>
<name>GGT_ECOLI</name>
<gene>
    <name type="primary">ggt</name>
    <name type="ordered locus">b3447</name>
    <name type="ordered locus">JW3412</name>
</gene>
<evidence type="ECO:0000256" key="1">
    <source>
        <dbReference type="SAM" id="MobiDB-lite"/>
    </source>
</evidence>
<evidence type="ECO:0000269" key="2">
    <source>
    </source>
</evidence>
<evidence type="ECO:0000269" key="3">
    <source>
    </source>
</evidence>
<evidence type="ECO:0000269" key="4">
    <source>
    </source>
</evidence>
<evidence type="ECO:0000269" key="5">
    <source>
    </source>
</evidence>
<evidence type="ECO:0000269" key="6">
    <source>
    </source>
</evidence>
<evidence type="ECO:0000269" key="7">
    <source>
    </source>
</evidence>
<evidence type="ECO:0000269" key="8">
    <source>
    </source>
</evidence>
<evidence type="ECO:0000303" key="9">
    <source>
    </source>
</evidence>
<evidence type="ECO:0000305" key="10"/>
<evidence type="ECO:0000305" key="11">
    <source>
    </source>
</evidence>
<evidence type="ECO:0000305" key="12">
    <source>
    </source>
</evidence>
<evidence type="ECO:0007829" key="13">
    <source>
        <dbReference type="PDB" id="2DBU"/>
    </source>
</evidence>
<evidence type="ECO:0007829" key="14">
    <source>
        <dbReference type="PDB" id="2DG5"/>
    </source>
</evidence>
<evidence type="ECO:0007829" key="15">
    <source>
        <dbReference type="PDB" id="2E0Y"/>
    </source>
</evidence>
<dbReference type="EC" id="3.4.19.13" evidence="11"/>
<dbReference type="EC" id="2.3.2.2" evidence="2"/>
<dbReference type="EMBL" id="M28722">
    <property type="protein sequence ID" value="AAA23869.1"/>
    <property type="molecule type" value="Genomic_DNA"/>
</dbReference>
<dbReference type="EMBL" id="U18997">
    <property type="protein sequence ID" value="AAA58245.1"/>
    <property type="molecule type" value="Genomic_DNA"/>
</dbReference>
<dbReference type="EMBL" id="U00096">
    <property type="protein sequence ID" value="AAC76472.1"/>
    <property type="molecule type" value="Genomic_DNA"/>
</dbReference>
<dbReference type="EMBL" id="AP009048">
    <property type="protein sequence ID" value="BAE77846.1"/>
    <property type="molecule type" value="Genomic_DNA"/>
</dbReference>
<dbReference type="EMBL" id="U00039">
    <property type="protein sequence ID" value="AAB18422.1"/>
    <property type="molecule type" value="Genomic_DNA"/>
</dbReference>
<dbReference type="PIR" id="JV0028">
    <property type="entry name" value="EKECEX"/>
</dbReference>
<dbReference type="RefSeq" id="NP_417904.1">
    <property type="nucleotide sequence ID" value="NC_000913.3"/>
</dbReference>
<dbReference type="RefSeq" id="WP_000595082.1">
    <property type="nucleotide sequence ID" value="NZ_SSZK01000008.1"/>
</dbReference>
<dbReference type="PDB" id="2DBU">
    <property type="method" value="X-ray"/>
    <property type="resolution" value="1.95 A"/>
    <property type="chains" value="A/C=25-390, B/D=391-580"/>
</dbReference>
<dbReference type="PDB" id="2DBW">
    <property type="method" value="X-ray"/>
    <property type="resolution" value="1.80 A"/>
    <property type="chains" value="A/C=25-390, B/D=391-580"/>
</dbReference>
<dbReference type="PDB" id="2DBX">
    <property type="method" value="X-ray"/>
    <property type="resolution" value="1.70 A"/>
    <property type="chains" value="A/C=25-390, B/D=391-580"/>
</dbReference>
<dbReference type="PDB" id="2DG5">
    <property type="method" value="X-ray"/>
    <property type="resolution" value="1.60 A"/>
    <property type="chains" value="A/C=25-390, B/D=391-580"/>
</dbReference>
<dbReference type="PDB" id="2E0W">
    <property type="method" value="X-ray"/>
    <property type="resolution" value="2.55 A"/>
    <property type="chains" value="A/B=25-580"/>
</dbReference>
<dbReference type="PDB" id="2E0X">
    <property type="method" value="X-ray"/>
    <property type="resolution" value="1.95 A"/>
    <property type="chains" value="A/C=25-390, B/D=391-580"/>
</dbReference>
<dbReference type="PDB" id="2E0Y">
    <property type="method" value="X-ray"/>
    <property type="resolution" value="2.02 A"/>
    <property type="chains" value="A/C=25-390, B/D=391-580"/>
</dbReference>
<dbReference type="PDB" id="2Z8I">
    <property type="method" value="X-ray"/>
    <property type="resolution" value="1.65 A"/>
    <property type="chains" value="A/C=25-390, B/D=391-580"/>
</dbReference>
<dbReference type="PDB" id="2Z8J">
    <property type="method" value="X-ray"/>
    <property type="resolution" value="2.05 A"/>
    <property type="chains" value="A/C=25-390, B/D=391-580"/>
</dbReference>
<dbReference type="PDB" id="2Z8K">
    <property type="method" value="X-ray"/>
    <property type="resolution" value="1.65 A"/>
    <property type="chains" value="A/C=25-390, B/D=391-580"/>
</dbReference>
<dbReference type="PDB" id="5B5T">
    <property type="method" value="X-ray"/>
    <property type="resolution" value="1.70 A"/>
    <property type="chains" value="A/C=25-390, B/D=391-580"/>
</dbReference>
<dbReference type="PDBsum" id="2DBU"/>
<dbReference type="PDBsum" id="2DBW"/>
<dbReference type="PDBsum" id="2DBX"/>
<dbReference type="PDBsum" id="2DG5"/>
<dbReference type="PDBsum" id="2E0W"/>
<dbReference type="PDBsum" id="2E0X"/>
<dbReference type="PDBsum" id="2E0Y"/>
<dbReference type="PDBsum" id="2Z8I"/>
<dbReference type="PDBsum" id="2Z8J"/>
<dbReference type="PDBsum" id="2Z8K"/>
<dbReference type="PDBsum" id="5B5T"/>
<dbReference type="SMR" id="P18956"/>
<dbReference type="BioGRID" id="4261666">
    <property type="interactions" value="434"/>
</dbReference>
<dbReference type="DIP" id="DIP-9758N"/>
<dbReference type="FunCoup" id="P18956">
    <property type="interactions" value="420"/>
</dbReference>
<dbReference type="IntAct" id="P18956">
    <property type="interactions" value="1"/>
</dbReference>
<dbReference type="STRING" id="511145.b3447"/>
<dbReference type="MEROPS" id="T03.001"/>
<dbReference type="jPOST" id="P18956"/>
<dbReference type="PaxDb" id="511145-b3447"/>
<dbReference type="EnsemblBacteria" id="AAC76472">
    <property type="protein sequence ID" value="AAC76472"/>
    <property type="gene ID" value="b3447"/>
</dbReference>
<dbReference type="GeneID" id="947947"/>
<dbReference type="KEGG" id="ecj:JW3412"/>
<dbReference type="KEGG" id="eco:b3447"/>
<dbReference type="KEGG" id="ecoc:C3026_18670"/>
<dbReference type="PATRIC" id="fig|511145.12.peg.3544"/>
<dbReference type="EchoBASE" id="EB0369"/>
<dbReference type="eggNOG" id="COG0405">
    <property type="taxonomic scope" value="Bacteria"/>
</dbReference>
<dbReference type="HOGENOM" id="CLU_014813_0_3_6"/>
<dbReference type="InParanoid" id="P18956"/>
<dbReference type="OMA" id="GFMLVHL"/>
<dbReference type="OrthoDB" id="5297205at2"/>
<dbReference type="PhylomeDB" id="P18956"/>
<dbReference type="BioCyc" id="EcoCyc:EG10374-MONOMER"/>
<dbReference type="BioCyc" id="MetaCyc:EG10374-MONOMER"/>
<dbReference type="BRENDA" id="2.3.2.2">
    <property type="organism ID" value="2026"/>
</dbReference>
<dbReference type="BRENDA" id="3.4.19.13">
    <property type="organism ID" value="2026"/>
</dbReference>
<dbReference type="SABIO-RK" id="P18956"/>
<dbReference type="UniPathway" id="UPA00204"/>
<dbReference type="EvolutionaryTrace" id="P18956"/>
<dbReference type="PRO" id="PR:P18956"/>
<dbReference type="Proteomes" id="UP000000625">
    <property type="component" value="Chromosome"/>
</dbReference>
<dbReference type="GO" id="GO:0030288">
    <property type="term" value="C:outer membrane-bounded periplasmic space"/>
    <property type="evidence" value="ECO:0000314"/>
    <property type="project" value="EcoCyc"/>
</dbReference>
<dbReference type="GO" id="GO:0042597">
    <property type="term" value="C:periplasmic space"/>
    <property type="evidence" value="ECO:0000314"/>
    <property type="project" value="EcoliWiki"/>
</dbReference>
<dbReference type="GO" id="GO:0034722">
    <property type="term" value="F:gamma-glutamyl-peptidase activity"/>
    <property type="evidence" value="ECO:0000314"/>
    <property type="project" value="EcoCyc"/>
</dbReference>
<dbReference type="GO" id="GO:0036374">
    <property type="term" value="F:glutathione hydrolase activity"/>
    <property type="evidence" value="ECO:0000314"/>
    <property type="project" value="EcoCyc"/>
</dbReference>
<dbReference type="GO" id="GO:0103068">
    <property type="term" value="F:leukotriene C4 gamma-glutamyl transferase activity"/>
    <property type="evidence" value="ECO:0007669"/>
    <property type="project" value="UniProtKB-EC"/>
</dbReference>
<dbReference type="GO" id="GO:0043102">
    <property type="term" value="P:amino acid salvage"/>
    <property type="evidence" value="ECO:0000315"/>
    <property type="project" value="EcoCyc"/>
</dbReference>
<dbReference type="GO" id="GO:0006750">
    <property type="term" value="P:glutathione biosynthetic process"/>
    <property type="evidence" value="ECO:0007669"/>
    <property type="project" value="UniProtKB-KW"/>
</dbReference>
<dbReference type="GO" id="GO:0006751">
    <property type="term" value="P:glutathione catabolic process"/>
    <property type="evidence" value="ECO:0007669"/>
    <property type="project" value="InterPro"/>
</dbReference>
<dbReference type="GO" id="GO:0097264">
    <property type="term" value="P:self proteolysis"/>
    <property type="evidence" value="ECO:0000314"/>
    <property type="project" value="EcoCyc"/>
</dbReference>
<dbReference type="FunFam" id="3.60.20.40:FF:000003">
    <property type="entry name" value="Gamma-glutamyltranspeptidase"/>
    <property type="match status" value="1"/>
</dbReference>
<dbReference type="FunFam" id="1.10.246.130:FF:000004">
    <property type="entry name" value="Gamma-glutamyltranspeptidase (Ggt)"/>
    <property type="match status" value="1"/>
</dbReference>
<dbReference type="Gene3D" id="1.10.246.130">
    <property type="match status" value="1"/>
</dbReference>
<dbReference type="Gene3D" id="3.60.20.40">
    <property type="match status" value="1"/>
</dbReference>
<dbReference type="InterPro" id="IPR051792">
    <property type="entry name" value="GGT_bact"/>
</dbReference>
<dbReference type="InterPro" id="IPR055262">
    <property type="entry name" value="GGT_CS"/>
</dbReference>
<dbReference type="InterPro" id="IPR043138">
    <property type="entry name" value="GGT_lsub_C"/>
</dbReference>
<dbReference type="InterPro" id="IPR000101">
    <property type="entry name" value="GGT_peptidase"/>
</dbReference>
<dbReference type="InterPro" id="IPR043137">
    <property type="entry name" value="GGT_ssub"/>
</dbReference>
<dbReference type="InterPro" id="IPR029055">
    <property type="entry name" value="Ntn_hydrolases_N"/>
</dbReference>
<dbReference type="NCBIfam" id="TIGR00066">
    <property type="entry name" value="g_glut_trans"/>
    <property type="match status" value="1"/>
</dbReference>
<dbReference type="NCBIfam" id="NF007187">
    <property type="entry name" value="PRK09615.1"/>
    <property type="match status" value="1"/>
</dbReference>
<dbReference type="PANTHER" id="PTHR43199">
    <property type="entry name" value="GLUTATHIONE HYDROLASE"/>
    <property type="match status" value="1"/>
</dbReference>
<dbReference type="PANTHER" id="PTHR43199:SF1">
    <property type="entry name" value="GLUTATHIONE HYDROLASE PROENZYME"/>
    <property type="match status" value="1"/>
</dbReference>
<dbReference type="Pfam" id="PF01019">
    <property type="entry name" value="G_glu_transpept"/>
    <property type="match status" value="1"/>
</dbReference>
<dbReference type="PRINTS" id="PR01210">
    <property type="entry name" value="GGTRANSPTASE"/>
</dbReference>
<dbReference type="SUPFAM" id="SSF56235">
    <property type="entry name" value="N-terminal nucleophile aminohydrolases (Ntn hydrolases)"/>
    <property type="match status" value="1"/>
</dbReference>
<dbReference type="PROSITE" id="PS00462">
    <property type="entry name" value="G_GLU_TRANSPEPTIDASE"/>
    <property type="match status" value="1"/>
</dbReference>
<keyword id="KW-0002">3D-structure</keyword>
<keyword id="KW-0012">Acyltransferase</keyword>
<keyword id="KW-0903">Direct protein sequencing</keyword>
<keyword id="KW-0317">Glutathione biosynthesis</keyword>
<keyword id="KW-0378">Hydrolase</keyword>
<keyword id="KW-0574">Periplasm</keyword>
<keyword id="KW-0645">Protease</keyword>
<keyword id="KW-1185">Reference proteome</keyword>
<keyword id="KW-0732">Signal</keyword>
<keyword id="KW-0808">Transferase</keyword>
<keyword id="KW-0865">Zymogen</keyword>
<organism>
    <name type="scientific">Escherichia coli (strain K12)</name>
    <dbReference type="NCBI Taxonomy" id="83333"/>
    <lineage>
        <taxon>Bacteria</taxon>
        <taxon>Pseudomonadati</taxon>
        <taxon>Pseudomonadota</taxon>
        <taxon>Gammaproteobacteria</taxon>
        <taxon>Enterobacterales</taxon>
        <taxon>Enterobacteriaceae</taxon>
        <taxon>Escherichia</taxon>
    </lineage>
</organism>
<comment type="function">
    <text evidence="7 12">Cleaves the gamma-glutamyl bond of periplasmic glutathione (gamma-Glu-Cys-Gly), glutathione conjugates, and other gamma-glutamyl compounds. The metabolism of glutathione releases free glutamate and the dipeptide cysteinyl-glycine, which is hydrolyzed to cysteine and glycine by dipeptidases; it may function in amino acid uptake/salvage, or possibly in peptidoglycan linkage. Catalyzes the hydrolysis and transpeptidation of many gamma-glutamyl compounds (including some D-gamma-glutamyl substrates), with a preference for basic and aromatic amino acids as acceptors (PubMed:2877974). The KM values for gamma-glutamyl acceptors are so high that it has been proposed transpeptidation is not the physiological role in E.coli (PubMed:2877974, PubMed:8104180).</text>
</comment>
<comment type="catalytic activity">
    <reaction evidence="2">
        <text>an N-terminal (5-L-glutamyl)-[peptide] + an alpha-amino acid = 5-L-glutamyl amino acid + an N-terminal L-alpha-aminoacyl-[peptide]</text>
        <dbReference type="Rhea" id="RHEA:23904"/>
        <dbReference type="Rhea" id="RHEA-COMP:9780"/>
        <dbReference type="Rhea" id="RHEA-COMP:9795"/>
        <dbReference type="ChEBI" id="CHEBI:77644"/>
        <dbReference type="ChEBI" id="CHEBI:78597"/>
        <dbReference type="ChEBI" id="CHEBI:78599"/>
        <dbReference type="ChEBI" id="CHEBI:78608"/>
        <dbReference type="EC" id="2.3.2.2"/>
    </reaction>
</comment>
<comment type="catalytic activity">
    <reaction evidence="11">
        <text>glutathione + H2O = L-cysteinylglycine + L-glutamate</text>
        <dbReference type="Rhea" id="RHEA:28807"/>
        <dbReference type="ChEBI" id="CHEBI:15377"/>
        <dbReference type="ChEBI" id="CHEBI:29985"/>
        <dbReference type="ChEBI" id="CHEBI:57925"/>
        <dbReference type="ChEBI" id="CHEBI:61694"/>
        <dbReference type="EC" id="3.4.19.13"/>
    </reaction>
</comment>
<comment type="catalytic activity">
    <reaction evidence="11">
        <text>an S-substituted glutathione + H2O = an S-substituted L-cysteinylglycine + L-glutamate</text>
        <dbReference type="Rhea" id="RHEA:59468"/>
        <dbReference type="ChEBI" id="CHEBI:15377"/>
        <dbReference type="ChEBI" id="CHEBI:29985"/>
        <dbReference type="ChEBI" id="CHEBI:90779"/>
        <dbReference type="ChEBI" id="CHEBI:143103"/>
        <dbReference type="EC" id="3.4.19.13"/>
    </reaction>
</comment>
<comment type="activity regulation">
    <text evidence="7">Transferase and hydrolase activities are inhibited by L-Ala and L-Gln, and also by GGT affinity labeling reagents such as azaserine and 6-diazo-5-oxo-nor-leucine.</text>
</comment>
<comment type="biophysicochemical properties">
    <kinetics>
        <KM evidence="7">35 uM for glutathione transfer to glycylglycine (gly-gly)</KM>
        <KM evidence="7">35 uM for gamma-glutamyl-p-nitroanilide (gamma-GpNA) transfer to gly-gly</KM>
        <KM evidence="7">29 uM for glutathione hydrolysis</KM>
        <KM evidence="7">68 uM for gamma-GpNA hydrolysis</KM>
    </kinetics>
    <phDependence>
        <text evidence="7">Optimum pH is 8.73 for transfer of p-nitroanilide from gamma-GpNA to gly-gly and 9.25 for hydrolysis of gamma-GpNA.</text>
    </phDependence>
    <temperatureDependence>
        <text evidence="7">Optimum temperature is 50 degrees Celsius for both transferase and hydrolase activities.</text>
    </temperatureDependence>
</comment>
<comment type="pathway">
    <text>Sulfur metabolism; glutathione metabolism.</text>
</comment>
<comment type="subunit">
    <text evidence="2 3 4 5 7">This enzyme consists of two polypeptide chains, which are synthesized in precursor form from a single polypeptide.</text>
</comment>
<comment type="subcellular location">
    <subcellularLocation>
        <location evidence="2 7">Periplasm</location>
    </subcellularLocation>
</comment>
<comment type="PTM">
    <text evidence="2 3 4 5 6">Cleaved by autocatalysis into a large and a small subunit.</text>
</comment>
<comment type="disruption phenotype">
    <text evidence="8">Loss of growth using exogenous gamma-glutamyl peptides as amino acid sources.</text>
</comment>
<comment type="similarity">
    <text evidence="10">Belongs to the gamma-glutamyltransferase family.</text>
</comment>